<accession>Q7V0W1</accession>
<evidence type="ECO:0000255" key="1">
    <source>
        <dbReference type="HAMAP-Rule" id="MF_00041"/>
    </source>
</evidence>
<gene>
    <name evidence="1" type="primary">cysS</name>
    <name type="ordered locus">PMM1141</name>
</gene>
<comment type="catalytic activity">
    <reaction evidence="1">
        <text>tRNA(Cys) + L-cysteine + ATP = L-cysteinyl-tRNA(Cys) + AMP + diphosphate</text>
        <dbReference type="Rhea" id="RHEA:17773"/>
        <dbReference type="Rhea" id="RHEA-COMP:9661"/>
        <dbReference type="Rhea" id="RHEA-COMP:9679"/>
        <dbReference type="ChEBI" id="CHEBI:30616"/>
        <dbReference type="ChEBI" id="CHEBI:33019"/>
        <dbReference type="ChEBI" id="CHEBI:35235"/>
        <dbReference type="ChEBI" id="CHEBI:78442"/>
        <dbReference type="ChEBI" id="CHEBI:78517"/>
        <dbReference type="ChEBI" id="CHEBI:456215"/>
        <dbReference type="EC" id="6.1.1.16"/>
    </reaction>
</comment>
<comment type="cofactor">
    <cofactor evidence="1">
        <name>Zn(2+)</name>
        <dbReference type="ChEBI" id="CHEBI:29105"/>
    </cofactor>
    <text evidence="1">Binds 1 zinc ion per subunit.</text>
</comment>
<comment type="subunit">
    <text evidence="1">Monomer.</text>
</comment>
<comment type="subcellular location">
    <subcellularLocation>
        <location evidence="1">Cytoplasm</location>
    </subcellularLocation>
</comment>
<comment type="similarity">
    <text evidence="1">Belongs to the class-I aminoacyl-tRNA synthetase family.</text>
</comment>
<organism>
    <name type="scientific">Prochlorococcus marinus subsp. pastoris (strain CCMP1986 / NIES-2087 / MED4)</name>
    <dbReference type="NCBI Taxonomy" id="59919"/>
    <lineage>
        <taxon>Bacteria</taxon>
        <taxon>Bacillati</taxon>
        <taxon>Cyanobacteriota</taxon>
        <taxon>Cyanophyceae</taxon>
        <taxon>Synechococcales</taxon>
        <taxon>Prochlorococcaceae</taxon>
        <taxon>Prochlorococcus</taxon>
    </lineage>
</organism>
<reference key="1">
    <citation type="journal article" date="2003" name="Nature">
        <title>Genome divergence in two Prochlorococcus ecotypes reflects oceanic niche differentiation.</title>
        <authorList>
            <person name="Rocap G."/>
            <person name="Larimer F.W."/>
            <person name="Lamerdin J.E."/>
            <person name="Malfatti S."/>
            <person name="Chain P."/>
            <person name="Ahlgren N.A."/>
            <person name="Arellano A."/>
            <person name="Coleman M."/>
            <person name="Hauser L."/>
            <person name="Hess W.R."/>
            <person name="Johnson Z.I."/>
            <person name="Land M.L."/>
            <person name="Lindell D."/>
            <person name="Post A.F."/>
            <person name="Regala W."/>
            <person name="Shah M."/>
            <person name="Shaw S.L."/>
            <person name="Steglich C."/>
            <person name="Sullivan M.B."/>
            <person name="Ting C.S."/>
            <person name="Tolonen A."/>
            <person name="Webb E.A."/>
            <person name="Zinser E.R."/>
            <person name="Chisholm S.W."/>
        </authorList>
    </citation>
    <scope>NUCLEOTIDE SEQUENCE [LARGE SCALE GENOMIC DNA]</scope>
    <source>
        <strain>CCMP1986 / NIES-2087 / MED4</strain>
    </source>
</reference>
<keyword id="KW-0030">Aminoacyl-tRNA synthetase</keyword>
<keyword id="KW-0067">ATP-binding</keyword>
<keyword id="KW-0963">Cytoplasm</keyword>
<keyword id="KW-0436">Ligase</keyword>
<keyword id="KW-0479">Metal-binding</keyword>
<keyword id="KW-0547">Nucleotide-binding</keyword>
<keyword id="KW-0648">Protein biosynthesis</keyword>
<keyword id="KW-0862">Zinc</keyword>
<sequence>MIKLFNTLSKNIEVFKPIDEVVKIYCCGVTVYDLCHLGHARSYIAWDILRRFLIYSDYKVKYVQNFTDIDDKILKRAKEENSSMNEVSEKNITEFHKDMDALGIMRPDSMPKATNHICNICSFIKVLEDKGFAYIRGGDVYYSVFKNKNYGKLSNQNILEQNINQQGRITTDESNKKENPQDFALWKKAKDNEPSFDSPWGKGRPGWHIECSAMVKDELGETIDIHLGGSDLIFPHHENEIAQSESANNKKLANYWLHNGMVNVNGQKMSKSLKNFTTIRDLLDSGTSPMTLRYFVLTVNYRKPLDFTDEALKSASEAWKNINVALSLFDITKKENLSIEVNETNEFVEETYKDMINYEISQKKIKFTNALNNDLNTAGAIAIIYELAKPLKNFINQFQRIKNLEINTNEKFHLRETFKTLEELTDVLGLKKEEIIIDNRINEDQILSLINKRLGAKKEKDYAEADKIRNLLKEKGVELIDQSPELTTWVRI</sequence>
<name>SYC_PROMP</name>
<protein>
    <recommendedName>
        <fullName evidence="1">Cysteine--tRNA ligase</fullName>
        <ecNumber evidence="1">6.1.1.16</ecNumber>
    </recommendedName>
    <alternativeName>
        <fullName evidence="1">Cysteinyl-tRNA synthetase</fullName>
        <shortName evidence="1">CysRS</shortName>
    </alternativeName>
</protein>
<proteinExistence type="inferred from homology"/>
<dbReference type="EC" id="6.1.1.16" evidence="1"/>
<dbReference type="EMBL" id="BX548174">
    <property type="protein sequence ID" value="CAE19600.1"/>
    <property type="molecule type" value="Genomic_DNA"/>
</dbReference>
<dbReference type="RefSeq" id="WP_011132774.1">
    <property type="nucleotide sequence ID" value="NC_005072.1"/>
</dbReference>
<dbReference type="SMR" id="Q7V0W1"/>
<dbReference type="STRING" id="59919.PMM1141"/>
<dbReference type="KEGG" id="pmm:PMM1141"/>
<dbReference type="eggNOG" id="COG0215">
    <property type="taxonomic scope" value="Bacteria"/>
</dbReference>
<dbReference type="HOGENOM" id="CLU_013528_0_1_3"/>
<dbReference type="OrthoDB" id="9815130at2"/>
<dbReference type="Proteomes" id="UP000001026">
    <property type="component" value="Chromosome"/>
</dbReference>
<dbReference type="GO" id="GO:0005829">
    <property type="term" value="C:cytosol"/>
    <property type="evidence" value="ECO:0007669"/>
    <property type="project" value="TreeGrafter"/>
</dbReference>
<dbReference type="GO" id="GO:0005524">
    <property type="term" value="F:ATP binding"/>
    <property type="evidence" value="ECO:0007669"/>
    <property type="project" value="UniProtKB-UniRule"/>
</dbReference>
<dbReference type="GO" id="GO:0004817">
    <property type="term" value="F:cysteine-tRNA ligase activity"/>
    <property type="evidence" value="ECO:0007669"/>
    <property type="project" value="UniProtKB-UniRule"/>
</dbReference>
<dbReference type="GO" id="GO:0008270">
    <property type="term" value="F:zinc ion binding"/>
    <property type="evidence" value="ECO:0007669"/>
    <property type="project" value="UniProtKB-UniRule"/>
</dbReference>
<dbReference type="GO" id="GO:0006423">
    <property type="term" value="P:cysteinyl-tRNA aminoacylation"/>
    <property type="evidence" value="ECO:0007669"/>
    <property type="project" value="UniProtKB-UniRule"/>
</dbReference>
<dbReference type="CDD" id="cd00672">
    <property type="entry name" value="CysRS_core"/>
    <property type="match status" value="1"/>
</dbReference>
<dbReference type="FunFam" id="3.40.50.620:FF:000009">
    <property type="entry name" value="Cysteine--tRNA ligase"/>
    <property type="match status" value="1"/>
</dbReference>
<dbReference type="Gene3D" id="1.20.120.1910">
    <property type="entry name" value="Cysteine-tRNA ligase, C-terminal anti-codon recognition domain"/>
    <property type="match status" value="1"/>
</dbReference>
<dbReference type="Gene3D" id="3.40.50.620">
    <property type="entry name" value="HUPs"/>
    <property type="match status" value="1"/>
</dbReference>
<dbReference type="HAMAP" id="MF_00041">
    <property type="entry name" value="Cys_tRNA_synth"/>
    <property type="match status" value="1"/>
</dbReference>
<dbReference type="InterPro" id="IPR015803">
    <property type="entry name" value="Cys-tRNA-ligase"/>
</dbReference>
<dbReference type="InterPro" id="IPR015273">
    <property type="entry name" value="Cys-tRNA-synt_Ia_DALR"/>
</dbReference>
<dbReference type="InterPro" id="IPR024909">
    <property type="entry name" value="Cys-tRNA/MSH_ligase"/>
</dbReference>
<dbReference type="InterPro" id="IPR014729">
    <property type="entry name" value="Rossmann-like_a/b/a_fold"/>
</dbReference>
<dbReference type="InterPro" id="IPR032678">
    <property type="entry name" value="tRNA-synt_1_cat_dom"/>
</dbReference>
<dbReference type="InterPro" id="IPR009080">
    <property type="entry name" value="tRNAsynth_Ia_anticodon-bd"/>
</dbReference>
<dbReference type="NCBIfam" id="TIGR00435">
    <property type="entry name" value="cysS"/>
    <property type="match status" value="1"/>
</dbReference>
<dbReference type="PANTHER" id="PTHR10890:SF3">
    <property type="entry name" value="CYSTEINE--TRNA LIGASE, CYTOPLASMIC"/>
    <property type="match status" value="1"/>
</dbReference>
<dbReference type="PANTHER" id="PTHR10890">
    <property type="entry name" value="CYSTEINYL-TRNA SYNTHETASE"/>
    <property type="match status" value="1"/>
</dbReference>
<dbReference type="Pfam" id="PF09190">
    <property type="entry name" value="DALR_2"/>
    <property type="match status" value="1"/>
</dbReference>
<dbReference type="Pfam" id="PF01406">
    <property type="entry name" value="tRNA-synt_1e"/>
    <property type="match status" value="1"/>
</dbReference>
<dbReference type="PRINTS" id="PR00983">
    <property type="entry name" value="TRNASYNTHCYS"/>
</dbReference>
<dbReference type="SMART" id="SM00840">
    <property type="entry name" value="DALR_2"/>
    <property type="match status" value="1"/>
</dbReference>
<dbReference type="SUPFAM" id="SSF47323">
    <property type="entry name" value="Anticodon-binding domain of a subclass of class I aminoacyl-tRNA synthetases"/>
    <property type="match status" value="1"/>
</dbReference>
<dbReference type="SUPFAM" id="SSF52374">
    <property type="entry name" value="Nucleotidylyl transferase"/>
    <property type="match status" value="1"/>
</dbReference>
<feature type="chain" id="PRO_0000159459" description="Cysteine--tRNA ligase">
    <location>
        <begin position="1"/>
        <end position="492"/>
    </location>
</feature>
<feature type="short sequence motif" description="'HIGH' region">
    <location>
        <begin position="29"/>
        <end position="39"/>
    </location>
</feature>
<feature type="short sequence motif" description="'KMSKS' region">
    <location>
        <begin position="268"/>
        <end position="272"/>
    </location>
</feature>
<feature type="binding site" evidence="1">
    <location>
        <position position="27"/>
    </location>
    <ligand>
        <name>Zn(2+)</name>
        <dbReference type="ChEBI" id="CHEBI:29105"/>
    </ligand>
</feature>
<feature type="binding site" evidence="1">
    <location>
        <position position="211"/>
    </location>
    <ligand>
        <name>Zn(2+)</name>
        <dbReference type="ChEBI" id="CHEBI:29105"/>
    </ligand>
</feature>
<feature type="binding site" evidence="1">
    <location>
        <position position="236"/>
    </location>
    <ligand>
        <name>Zn(2+)</name>
        <dbReference type="ChEBI" id="CHEBI:29105"/>
    </ligand>
</feature>
<feature type="binding site" evidence="1">
    <location>
        <position position="240"/>
    </location>
    <ligand>
        <name>Zn(2+)</name>
        <dbReference type="ChEBI" id="CHEBI:29105"/>
    </ligand>
</feature>
<feature type="binding site" evidence="1">
    <location>
        <position position="271"/>
    </location>
    <ligand>
        <name>ATP</name>
        <dbReference type="ChEBI" id="CHEBI:30616"/>
    </ligand>
</feature>